<gene>
    <name evidence="1" type="primary">nadD</name>
    <name type="ordered locus">Teth514_2112</name>
</gene>
<proteinExistence type="inferred from homology"/>
<sequence length="211" mass="24226">MERELRLGIMGGTFDPIHYGHLVTAEAVRSEFKLDKVIFVPAGNPPHKVKRKVTDKKHRYLMTILATITNPFFEVSTIEIDREGYTYTIDTIKEFKKIYGEKTQLYFITGADAVLEILTWKSADELLKMCNFVAATRPGVEGNRIDEELNKIRKLYGNVIYKVTVPSLAISSTDIRERVAGGRPIKYLLPESVERYIQKYDLYKKDEENGV</sequence>
<dbReference type="EC" id="2.7.7.18" evidence="1"/>
<dbReference type="EMBL" id="CP000923">
    <property type="protein sequence ID" value="ABY93384.1"/>
    <property type="molecule type" value="Genomic_DNA"/>
</dbReference>
<dbReference type="RefSeq" id="WP_003868113.1">
    <property type="nucleotide sequence ID" value="NC_010320.1"/>
</dbReference>
<dbReference type="SMR" id="B0K413"/>
<dbReference type="KEGG" id="tex:Teth514_2112"/>
<dbReference type="HOGENOM" id="CLU_069765_1_0_9"/>
<dbReference type="UniPathway" id="UPA00253">
    <property type="reaction ID" value="UER00332"/>
</dbReference>
<dbReference type="Proteomes" id="UP000002155">
    <property type="component" value="Chromosome"/>
</dbReference>
<dbReference type="GO" id="GO:0005524">
    <property type="term" value="F:ATP binding"/>
    <property type="evidence" value="ECO:0007669"/>
    <property type="project" value="UniProtKB-KW"/>
</dbReference>
<dbReference type="GO" id="GO:0004515">
    <property type="term" value="F:nicotinate-nucleotide adenylyltransferase activity"/>
    <property type="evidence" value="ECO:0007669"/>
    <property type="project" value="UniProtKB-UniRule"/>
</dbReference>
<dbReference type="GO" id="GO:0009435">
    <property type="term" value="P:NAD biosynthetic process"/>
    <property type="evidence" value="ECO:0007669"/>
    <property type="project" value="UniProtKB-UniRule"/>
</dbReference>
<dbReference type="CDD" id="cd02165">
    <property type="entry name" value="NMNAT"/>
    <property type="match status" value="1"/>
</dbReference>
<dbReference type="FunFam" id="3.40.50.620:FF:000039">
    <property type="entry name" value="Probable nicotinate-nucleotide adenylyltransferase"/>
    <property type="match status" value="1"/>
</dbReference>
<dbReference type="Gene3D" id="3.40.50.620">
    <property type="entry name" value="HUPs"/>
    <property type="match status" value="1"/>
</dbReference>
<dbReference type="HAMAP" id="MF_00244">
    <property type="entry name" value="NaMN_adenylyltr"/>
    <property type="match status" value="1"/>
</dbReference>
<dbReference type="InterPro" id="IPR004821">
    <property type="entry name" value="Cyt_trans-like"/>
</dbReference>
<dbReference type="InterPro" id="IPR005248">
    <property type="entry name" value="NadD/NMNAT"/>
</dbReference>
<dbReference type="InterPro" id="IPR014729">
    <property type="entry name" value="Rossmann-like_a/b/a_fold"/>
</dbReference>
<dbReference type="NCBIfam" id="TIGR00125">
    <property type="entry name" value="cyt_tran_rel"/>
    <property type="match status" value="1"/>
</dbReference>
<dbReference type="NCBIfam" id="TIGR00482">
    <property type="entry name" value="nicotinate (nicotinamide) nucleotide adenylyltransferase"/>
    <property type="match status" value="1"/>
</dbReference>
<dbReference type="NCBIfam" id="NF000840">
    <property type="entry name" value="PRK00071.1-3"/>
    <property type="match status" value="1"/>
</dbReference>
<dbReference type="PANTHER" id="PTHR39321">
    <property type="entry name" value="NICOTINATE-NUCLEOTIDE ADENYLYLTRANSFERASE-RELATED"/>
    <property type="match status" value="1"/>
</dbReference>
<dbReference type="PANTHER" id="PTHR39321:SF3">
    <property type="entry name" value="PHOSPHOPANTETHEINE ADENYLYLTRANSFERASE"/>
    <property type="match status" value="1"/>
</dbReference>
<dbReference type="Pfam" id="PF01467">
    <property type="entry name" value="CTP_transf_like"/>
    <property type="match status" value="1"/>
</dbReference>
<dbReference type="SUPFAM" id="SSF52374">
    <property type="entry name" value="Nucleotidylyl transferase"/>
    <property type="match status" value="1"/>
</dbReference>
<name>NADD_THEPX</name>
<accession>B0K413</accession>
<protein>
    <recommendedName>
        <fullName evidence="1">Probable nicotinate-nucleotide adenylyltransferase</fullName>
        <ecNumber evidence="1">2.7.7.18</ecNumber>
    </recommendedName>
    <alternativeName>
        <fullName evidence="1">Deamido-NAD(+) diphosphorylase</fullName>
    </alternativeName>
    <alternativeName>
        <fullName evidence="1">Deamido-NAD(+) pyrophosphorylase</fullName>
    </alternativeName>
    <alternativeName>
        <fullName evidence="1">Nicotinate mononucleotide adenylyltransferase</fullName>
        <shortName evidence="1">NaMN adenylyltransferase</shortName>
    </alternativeName>
</protein>
<evidence type="ECO:0000255" key="1">
    <source>
        <dbReference type="HAMAP-Rule" id="MF_00244"/>
    </source>
</evidence>
<comment type="function">
    <text evidence="1">Catalyzes the reversible adenylation of nicotinate mononucleotide (NaMN) to nicotinic acid adenine dinucleotide (NaAD).</text>
</comment>
<comment type="catalytic activity">
    <reaction evidence="1">
        <text>nicotinate beta-D-ribonucleotide + ATP + H(+) = deamido-NAD(+) + diphosphate</text>
        <dbReference type="Rhea" id="RHEA:22860"/>
        <dbReference type="ChEBI" id="CHEBI:15378"/>
        <dbReference type="ChEBI" id="CHEBI:30616"/>
        <dbReference type="ChEBI" id="CHEBI:33019"/>
        <dbReference type="ChEBI" id="CHEBI:57502"/>
        <dbReference type="ChEBI" id="CHEBI:58437"/>
        <dbReference type="EC" id="2.7.7.18"/>
    </reaction>
</comment>
<comment type="pathway">
    <text evidence="1">Cofactor biosynthesis; NAD(+) biosynthesis; deamido-NAD(+) from nicotinate D-ribonucleotide: step 1/1.</text>
</comment>
<comment type="similarity">
    <text evidence="1">Belongs to the NadD family.</text>
</comment>
<organism>
    <name type="scientific">Thermoanaerobacter sp. (strain X514)</name>
    <dbReference type="NCBI Taxonomy" id="399726"/>
    <lineage>
        <taxon>Bacteria</taxon>
        <taxon>Bacillati</taxon>
        <taxon>Bacillota</taxon>
        <taxon>Clostridia</taxon>
        <taxon>Thermoanaerobacterales</taxon>
        <taxon>Thermoanaerobacteraceae</taxon>
        <taxon>Thermoanaerobacter</taxon>
    </lineage>
</organism>
<feature type="chain" id="PRO_1000100799" description="Probable nicotinate-nucleotide adenylyltransferase">
    <location>
        <begin position="1"/>
        <end position="211"/>
    </location>
</feature>
<reference key="1">
    <citation type="submission" date="2008-01" db="EMBL/GenBank/DDBJ databases">
        <title>Complete sequence of Thermoanaerobacter sp. X514.</title>
        <authorList>
            <consortium name="US DOE Joint Genome Institute"/>
            <person name="Copeland A."/>
            <person name="Lucas S."/>
            <person name="Lapidus A."/>
            <person name="Barry K."/>
            <person name="Glavina del Rio T."/>
            <person name="Dalin E."/>
            <person name="Tice H."/>
            <person name="Pitluck S."/>
            <person name="Bruce D."/>
            <person name="Goodwin L."/>
            <person name="Saunders E."/>
            <person name="Brettin T."/>
            <person name="Detter J.C."/>
            <person name="Han C."/>
            <person name="Schmutz J."/>
            <person name="Larimer F."/>
            <person name="Land M."/>
            <person name="Hauser L."/>
            <person name="Kyrpides N."/>
            <person name="Kim E."/>
            <person name="Hemme C."/>
            <person name="Fields M.W."/>
            <person name="He Z."/>
            <person name="Zhou J."/>
            <person name="Richardson P."/>
        </authorList>
    </citation>
    <scope>NUCLEOTIDE SEQUENCE [LARGE SCALE GENOMIC DNA]</scope>
    <source>
        <strain>X514</strain>
    </source>
</reference>
<keyword id="KW-0067">ATP-binding</keyword>
<keyword id="KW-0520">NAD</keyword>
<keyword id="KW-0547">Nucleotide-binding</keyword>
<keyword id="KW-0548">Nucleotidyltransferase</keyword>
<keyword id="KW-0662">Pyridine nucleotide biosynthesis</keyword>
<keyword id="KW-0808">Transferase</keyword>